<keyword id="KW-0008">Acetylcholine receptor inhibiting toxin</keyword>
<keyword id="KW-0903">Direct protein sequencing</keyword>
<keyword id="KW-1015">Disulfide bond</keyword>
<keyword id="KW-0872">Ion channel impairing toxin</keyword>
<keyword id="KW-0528">Neurotoxin</keyword>
<keyword id="KW-0629">Postsynaptic neurotoxin</keyword>
<keyword id="KW-0964">Secreted</keyword>
<keyword id="KW-0800">Toxin</keyword>
<proteinExistence type="evidence at protein level"/>
<reference key="1">
    <citation type="journal article" date="2009" name="Toxicon">
        <title>Biochemical characterization of the Micrurus pyrrhocryptus venom.</title>
        <authorList>
            <person name="Dokmetjian J.C."/>
            <person name="Del Canto S."/>
            <person name="Vinzon S."/>
            <person name="de Jimenez Bonino M.B."/>
        </authorList>
    </citation>
    <scope>PROTEIN SEQUENCE</scope>
    <scope>MASS SPECTROMETRY</scope>
    <scope>SUBCELLULAR LOCATION</scope>
    <source>
        <tissue>Venom</tissue>
    </source>
</reference>
<feature type="chain" id="PRO_0000377750" description="Weak neurotoxin D2B" evidence="3">
    <location>
        <begin position="1"/>
        <end position="58" status="greater than"/>
    </location>
</feature>
<feature type="disulfide bond" evidence="2">
    <location>
        <begin position="3"/>
        <end position="24"/>
    </location>
</feature>
<feature type="disulfide bond" evidence="2">
    <location>
        <begin position="17"/>
        <end position="41"/>
    </location>
</feature>
<feature type="disulfide bond" evidence="2">
    <location>
        <begin position="43"/>
        <end position="54"/>
    </location>
</feature>
<feature type="non-terminal residue">
    <location>
        <position position="58"/>
    </location>
</feature>
<evidence type="ECO:0000250" key="1">
    <source>
        <dbReference type="UniProtKB" id="F5CPD6"/>
    </source>
</evidence>
<evidence type="ECO:0000250" key="2">
    <source>
        <dbReference type="UniProtKB" id="P0C1Z0"/>
    </source>
</evidence>
<evidence type="ECO:0000269" key="3">
    <source>
    </source>
</evidence>
<evidence type="ECO:0000303" key="4">
    <source>
    </source>
</evidence>
<evidence type="ECO:0000305" key="5"/>
<accession>P0CAR4</accession>
<comment type="function">
    <text evidence="1">Binds to muscle nicotinic acetylcholine receptor (nAChR) and inhibit acetylcholine from binding to the receptor, thereby impairing neuromuscular transmission.</text>
</comment>
<comment type="subcellular location">
    <subcellularLocation>
        <location evidence="3">Secreted</location>
    </subcellularLocation>
</comment>
<comment type="tissue specificity">
    <text evidence="5">Expressed by the venom gland.</text>
</comment>
<comment type="mass spectrometry"/>
<comment type="similarity">
    <text evidence="5">Belongs to the three-finger toxin family. Short-chain subfamily. Type I alpha-neurotoxin sub-subfamily.</text>
</comment>
<organism>
    <name type="scientific">Micrurus pyrrhocryptus</name>
    <name type="common">Coral snake</name>
    <dbReference type="NCBI Taxonomy" id="129468"/>
    <lineage>
        <taxon>Eukaryota</taxon>
        <taxon>Metazoa</taxon>
        <taxon>Chordata</taxon>
        <taxon>Craniata</taxon>
        <taxon>Vertebrata</taxon>
        <taxon>Euteleostomi</taxon>
        <taxon>Lepidosauria</taxon>
        <taxon>Squamata</taxon>
        <taxon>Bifurcata</taxon>
        <taxon>Unidentata</taxon>
        <taxon>Episquamata</taxon>
        <taxon>Toxicofera</taxon>
        <taxon>Serpentes</taxon>
        <taxon>Colubroidea</taxon>
        <taxon>Elapidae</taxon>
        <taxon>Elapinae</taxon>
        <taxon>Micrurus</taxon>
    </lineage>
</organism>
<sequence>LICYNDHGYIGETSESCKNGETTCYEEXWTEARXXIIERACGCXKVKPGVQMKCCKTQ</sequence>
<name>3S12B_MICPY</name>
<protein>
    <recommendedName>
        <fullName evidence="4">Weak neurotoxin D2B</fullName>
    </recommendedName>
</protein>
<dbReference type="GO" id="GO:0005576">
    <property type="term" value="C:extracellular region"/>
    <property type="evidence" value="ECO:0007669"/>
    <property type="project" value="UniProtKB-SubCell"/>
</dbReference>
<dbReference type="GO" id="GO:0030550">
    <property type="term" value="F:acetylcholine receptor inhibitor activity"/>
    <property type="evidence" value="ECO:0007669"/>
    <property type="project" value="UniProtKB-KW"/>
</dbReference>
<dbReference type="GO" id="GO:0099106">
    <property type="term" value="F:ion channel regulator activity"/>
    <property type="evidence" value="ECO:0007669"/>
    <property type="project" value="UniProtKB-KW"/>
</dbReference>
<dbReference type="GO" id="GO:0090729">
    <property type="term" value="F:toxin activity"/>
    <property type="evidence" value="ECO:0007669"/>
    <property type="project" value="UniProtKB-KW"/>
</dbReference>
<dbReference type="CDD" id="cd00206">
    <property type="entry name" value="TFP_snake_toxin"/>
    <property type="match status" value="1"/>
</dbReference>
<dbReference type="Gene3D" id="2.10.60.10">
    <property type="entry name" value="CD59"/>
    <property type="match status" value="1"/>
</dbReference>
<dbReference type="InterPro" id="IPR003571">
    <property type="entry name" value="Snake_3FTx"/>
</dbReference>
<dbReference type="InterPro" id="IPR045860">
    <property type="entry name" value="Snake_toxin-like_sf"/>
</dbReference>
<dbReference type="InterPro" id="IPR054131">
    <property type="entry name" value="Toxin_cobra-type"/>
</dbReference>
<dbReference type="Pfam" id="PF21947">
    <property type="entry name" value="Toxin_cobra-type"/>
    <property type="match status" value="1"/>
</dbReference>
<dbReference type="SUPFAM" id="SSF57302">
    <property type="entry name" value="Snake toxin-like"/>
    <property type="match status" value="1"/>
</dbReference>